<feature type="chain" id="PRO_1000198210" description="Putative regulatory protein BCAH187_A3920">
    <location>
        <begin position="1"/>
        <end position="87"/>
    </location>
</feature>
<protein>
    <recommendedName>
        <fullName evidence="1">Putative regulatory protein BCAH187_A3920</fullName>
    </recommendedName>
</protein>
<name>Y3920_BACC7</name>
<dbReference type="EMBL" id="CP001177">
    <property type="protein sequence ID" value="ACJ78447.1"/>
    <property type="molecule type" value="Genomic_DNA"/>
</dbReference>
<dbReference type="SMR" id="B7HLK5"/>
<dbReference type="KEGG" id="bcr:BCAH187_A3920"/>
<dbReference type="HOGENOM" id="CLU_165326_0_0_9"/>
<dbReference type="Proteomes" id="UP000002214">
    <property type="component" value="Chromosome"/>
</dbReference>
<dbReference type="HAMAP" id="MF_01503">
    <property type="entry name" value="RemA"/>
    <property type="match status" value="1"/>
</dbReference>
<dbReference type="InterPro" id="IPR007169">
    <property type="entry name" value="RemA-like"/>
</dbReference>
<dbReference type="NCBIfam" id="NF046064">
    <property type="entry name" value="MtxBflmRegRemA"/>
    <property type="match status" value="1"/>
</dbReference>
<dbReference type="NCBIfam" id="NF003315">
    <property type="entry name" value="PRK04323.1"/>
    <property type="match status" value="1"/>
</dbReference>
<dbReference type="PANTHER" id="PTHR38449:SF1">
    <property type="entry name" value="REGULATORY PROTEIN SSL2874-RELATED"/>
    <property type="match status" value="1"/>
</dbReference>
<dbReference type="PANTHER" id="PTHR38449">
    <property type="entry name" value="REGULATORY PROTEIN TM_1690-RELATED"/>
    <property type="match status" value="1"/>
</dbReference>
<dbReference type="Pfam" id="PF04025">
    <property type="entry name" value="RemA-like"/>
    <property type="match status" value="1"/>
</dbReference>
<evidence type="ECO:0000255" key="1">
    <source>
        <dbReference type="HAMAP-Rule" id="MF_01503"/>
    </source>
</evidence>
<proteinExistence type="inferred from homology"/>
<gene>
    <name type="ordered locus">BCAH187_A3920</name>
</gene>
<sequence>MAMRFLNIGYGNIVSAHRIIAIVSPESAPIKRTVQEAREHNALLDATYGRKTRAVIVMDDGHVVLSPIQPETIAHRLNNKEELSEEG</sequence>
<organism>
    <name type="scientific">Bacillus cereus (strain AH187)</name>
    <dbReference type="NCBI Taxonomy" id="405534"/>
    <lineage>
        <taxon>Bacteria</taxon>
        <taxon>Bacillati</taxon>
        <taxon>Bacillota</taxon>
        <taxon>Bacilli</taxon>
        <taxon>Bacillales</taxon>
        <taxon>Bacillaceae</taxon>
        <taxon>Bacillus</taxon>
        <taxon>Bacillus cereus group</taxon>
    </lineage>
</organism>
<reference key="1">
    <citation type="submission" date="2008-10" db="EMBL/GenBank/DDBJ databases">
        <title>Genome sequence of Bacillus cereus AH187.</title>
        <authorList>
            <person name="Dodson R.J."/>
            <person name="Durkin A.S."/>
            <person name="Rosovitz M.J."/>
            <person name="Rasko D.A."/>
            <person name="Kolsto A.B."/>
            <person name="Okstad O.A."/>
            <person name="Ravel J."/>
            <person name="Sutton G."/>
        </authorList>
    </citation>
    <scope>NUCLEOTIDE SEQUENCE [LARGE SCALE GENOMIC DNA]</scope>
    <source>
        <strain>AH187</strain>
    </source>
</reference>
<accession>B7HLK5</accession>
<comment type="similarity">
    <text evidence="1">Belongs to the RemA family.</text>
</comment>